<protein>
    <recommendedName>
        <fullName evidence="1">Dihydroxy-acid dehydratase</fullName>
        <shortName evidence="1">DAD</shortName>
        <ecNumber evidence="1">4.2.1.9</ecNumber>
    </recommendedName>
</protein>
<proteinExistence type="inferred from homology"/>
<accession>Q5N3N2</accession>
<comment type="function">
    <text evidence="1">Functions in the biosynthesis of branched-chain amino acids. Catalyzes the dehydration of (2R,3R)-2,3-dihydroxy-3-methylpentanoate (2,3-dihydroxy-3-methylvalerate) into 2-oxo-3-methylpentanoate (2-oxo-3-methylvalerate) and of (2R)-2,3-dihydroxy-3-methylbutanoate (2,3-dihydroxyisovalerate) into 2-oxo-3-methylbutanoate (2-oxoisovalerate), the penultimate precursor to L-isoleucine and L-valine, respectively.</text>
</comment>
<comment type="catalytic activity">
    <reaction evidence="1">
        <text>(2R)-2,3-dihydroxy-3-methylbutanoate = 3-methyl-2-oxobutanoate + H2O</text>
        <dbReference type="Rhea" id="RHEA:24809"/>
        <dbReference type="ChEBI" id="CHEBI:11851"/>
        <dbReference type="ChEBI" id="CHEBI:15377"/>
        <dbReference type="ChEBI" id="CHEBI:49072"/>
        <dbReference type="EC" id="4.2.1.9"/>
    </reaction>
    <physiologicalReaction direction="left-to-right" evidence="1">
        <dbReference type="Rhea" id="RHEA:24810"/>
    </physiologicalReaction>
</comment>
<comment type="catalytic activity">
    <reaction evidence="1">
        <text>(2R,3R)-2,3-dihydroxy-3-methylpentanoate = (S)-3-methyl-2-oxopentanoate + H2O</text>
        <dbReference type="Rhea" id="RHEA:27694"/>
        <dbReference type="ChEBI" id="CHEBI:15377"/>
        <dbReference type="ChEBI" id="CHEBI:35146"/>
        <dbReference type="ChEBI" id="CHEBI:49258"/>
        <dbReference type="EC" id="4.2.1.9"/>
    </reaction>
    <physiologicalReaction direction="left-to-right" evidence="1">
        <dbReference type="Rhea" id="RHEA:27695"/>
    </physiologicalReaction>
</comment>
<comment type="cofactor">
    <cofactor evidence="1">
        <name>[2Fe-2S] cluster</name>
        <dbReference type="ChEBI" id="CHEBI:190135"/>
    </cofactor>
    <text evidence="1">Binds 1 [2Fe-2S] cluster per subunit. This cluster acts as a Lewis acid cofactor.</text>
</comment>
<comment type="cofactor">
    <cofactor evidence="1">
        <name>Mg(2+)</name>
        <dbReference type="ChEBI" id="CHEBI:18420"/>
    </cofactor>
</comment>
<comment type="pathway">
    <text evidence="1">Amino-acid biosynthesis; L-isoleucine biosynthesis; L-isoleucine from 2-oxobutanoate: step 3/4.</text>
</comment>
<comment type="pathway">
    <text evidence="1">Amino-acid biosynthesis; L-valine biosynthesis; L-valine from pyruvate: step 3/4.</text>
</comment>
<comment type="subunit">
    <text evidence="1">Homodimer.</text>
</comment>
<comment type="similarity">
    <text evidence="1">Belongs to the IlvD/Edd family.</text>
</comment>
<evidence type="ECO:0000255" key="1">
    <source>
        <dbReference type="HAMAP-Rule" id="MF_00012"/>
    </source>
</evidence>
<keyword id="KW-0001">2Fe-2S</keyword>
<keyword id="KW-0028">Amino-acid biosynthesis</keyword>
<keyword id="KW-0100">Branched-chain amino acid biosynthesis</keyword>
<keyword id="KW-0408">Iron</keyword>
<keyword id="KW-0411">Iron-sulfur</keyword>
<keyword id="KW-0456">Lyase</keyword>
<keyword id="KW-0460">Magnesium</keyword>
<keyword id="KW-0479">Metal-binding</keyword>
<sequence length="619" mass="66531">MPQYRSRTTTYGRNMAGARALWRATGMKDEDFEKPIIAVANSFTQFVPGHVHLKDLGQLVAREIERAGGVAKEFNTIAVDDGIAMGHGGMLYSLPSRDLIADSVEYMVNAHCADALVCISNCDKITPGMLMAALRLNIPAVFVSGGPMEAGKVILNGEERHLDLVDAMVVAADDRESDEDVATIERSACPTCGSCSGMFTANSMNCLTEALGLSLPGNGSLLATHGDRKELFLEAGRLAVKLAKQYYEQDDESVLPRSIASFKAFENAICLDIAMGGSTNTVLHLLAAAHEAGVDFTMKDIDRLSRKIPNLCKVAPSTQKYHMEDVHRAGGVIAILGELDRAGLLHREVPTVHSPSLGAALDQWDINRETATEEAKSRYLAAPGGVPTQEAFSQSKRWTALDLDRENGCIRDIEHAYSQDGGLAVLYGNLAEQGCIVKTAGVDENILVFSGPAVVCESQDEAVNWILNGRVKEGDVVLIRYEGPRGGPGMQEMLYPTSYLKSKGLGKACALITDGRFSGGTSGLSIGHVSPEAAEGGLIALVEQGDRIEIDIPNRRIHLAVSEEELAHRRAAMEARGDQAWTPKDRDRPISQALQAYAAMTTSAARGGVRDLSQILGSR</sequence>
<organism>
    <name type="scientific">Synechococcus sp. (strain ATCC 27144 / PCC 6301 / SAUG 1402/1)</name>
    <name type="common">Anacystis nidulans</name>
    <dbReference type="NCBI Taxonomy" id="269084"/>
    <lineage>
        <taxon>Bacteria</taxon>
        <taxon>Bacillati</taxon>
        <taxon>Cyanobacteriota</taxon>
        <taxon>Cyanophyceae</taxon>
        <taxon>Synechococcales</taxon>
        <taxon>Synechococcaceae</taxon>
        <taxon>Synechococcus</taxon>
    </lineage>
</organism>
<name>ILVD_SYNP6</name>
<reference key="1">
    <citation type="journal article" date="2007" name="Photosyn. Res.">
        <title>Complete nucleotide sequence of the freshwater unicellular cyanobacterium Synechococcus elongatus PCC 6301 chromosome: gene content and organization.</title>
        <authorList>
            <person name="Sugita C."/>
            <person name="Ogata K."/>
            <person name="Shikata M."/>
            <person name="Jikuya H."/>
            <person name="Takano J."/>
            <person name="Furumichi M."/>
            <person name="Kanehisa M."/>
            <person name="Omata T."/>
            <person name="Sugiura M."/>
            <person name="Sugita M."/>
        </authorList>
    </citation>
    <scope>NUCLEOTIDE SEQUENCE [LARGE SCALE GENOMIC DNA]</scope>
    <source>
        <strain>ATCC 27144 / PCC 6301 / SAUG 1402/1</strain>
    </source>
</reference>
<gene>
    <name evidence="1" type="primary">ilvD</name>
    <name type="ordered locus">syc0898_c</name>
</gene>
<dbReference type="EC" id="4.2.1.9" evidence="1"/>
<dbReference type="EMBL" id="AP008231">
    <property type="protein sequence ID" value="BAD79088.1"/>
    <property type="molecule type" value="Genomic_DNA"/>
</dbReference>
<dbReference type="RefSeq" id="WP_011243210.1">
    <property type="nucleotide sequence ID" value="NZ_CP085785.1"/>
</dbReference>
<dbReference type="SMR" id="Q5N3N2"/>
<dbReference type="GeneID" id="72429458"/>
<dbReference type="KEGG" id="syc:syc0898_c"/>
<dbReference type="eggNOG" id="COG0129">
    <property type="taxonomic scope" value="Bacteria"/>
</dbReference>
<dbReference type="UniPathway" id="UPA00047">
    <property type="reaction ID" value="UER00057"/>
</dbReference>
<dbReference type="UniPathway" id="UPA00049">
    <property type="reaction ID" value="UER00061"/>
</dbReference>
<dbReference type="Proteomes" id="UP000001175">
    <property type="component" value="Chromosome"/>
</dbReference>
<dbReference type="GO" id="GO:0005829">
    <property type="term" value="C:cytosol"/>
    <property type="evidence" value="ECO:0007669"/>
    <property type="project" value="TreeGrafter"/>
</dbReference>
<dbReference type="GO" id="GO:0051537">
    <property type="term" value="F:2 iron, 2 sulfur cluster binding"/>
    <property type="evidence" value="ECO:0007669"/>
    <property type="project" value="UniProtKB-UniRule"/>
</dbReference>
<dbReference type="GO" id="GO:0004160">
    <property type="term" value="F:dihydroxy-acid dehydratase activity"/>
    <property type="evidence" value="ECO:0007669"/>
    <property type="project" value="UniProtKB-UniRule"/>
</dbReference>
<dbReference type="GO" id="GO:0000287">
    <property type="term" value="F:magnesium ion binding"/>
    <property type="evidence" value="ECO:0007669"/>
    <property type="project" value="UniProtKB-UniRule"/>
</dbReference>
<dbReference type="GO" id="GO:0009097">
    <property type="term" value="P:isoleucine biosynthetic process"/>
    <property type="evidence" value="ECO:0007669"/>
    <property type="project" value="UniProtKB-UniRule"/>
</dbReference>
<dbReference type="GO" id="GO:0009099">
    <property type="term" value="P:L-valine biosynthetic process"/>
    <property type="evidence" value="ECO:0007669"/>
    <property type="project" value="UniProtKB-UniRule"/>
</dbReference>
<dbReference type="FunFam" id="3.50.30.80:FF:000001">
    <property type="entry name" value="Dihydroxy-acid dehydratase"/>
    <property type="match status" value="1"/>
</dbReference>
<dbReference type="Gene3D" id="3.50.30.80">
    <property type="entry name" value="IlvD/EDD C-terminal domain-like"/>
    <property type="match status" value="1"/>
</dbReference>
<dbReference type="HAMAP" id="MF_00012">
    <property type="entry name" value="IlvD"/>
    <property type="match status" value="1"/>
</dbReference>
<dbReference type="InterPro" id="IPR042096">
    <property type="entry name" value="Dihydro-acid_dehy_C"/>
</dbReference>
<dbReference type="InterPro" id="IPR004404">
    <property type="entry name" value="DihydroxyA_deHydtase"/>
</dbReference>
<dbReference type="InterPro" id="IPR020558">
    <property type="entry name" value="DiOHA_6PGluconate_deHydtase_CS"/>
</dbReference>
<dbReference type="InterPro" id="IPR056740">
    <property type="entry name" value="ILV_EDD_C"/>
</dbReference>
<dbReference type="InterPro" id="IPR000581">
    <property type="entry name" value="ILV_EDD_N"/>
</dbReference>
<dbReference type="InterPro" id="IPR037237">
    <property type="entry name" value="IlvD/EDD_N"/>
</dbReference>
<dbReference type="NCBIfam" id="TIGR00110">
    <property type="entry name" value="ilvD"/>
    <property type="match status" value="1"/>
</dbReference>
<dbReference type="NCBIfam" id="NF009103">
    <property type="entry name" value="PRK12448.1"/>
    <property type="match status" value="1"/>
</dbReference>
<dbReference type="PANTHER" id="PTHR43661">
    <property type="entry name" value="D-XYLONATE DEHYDRATASE"/>
    <property type="match status" value="1"/>
</dbReference>
<dbReference type="PANTHER" id="PTHR43661:SF3">
    <property type="entry name" value="D-XYLONATE DEHYDRATASE YAGF-RELATED"/>
    <property type="match status" value="1"/>
</dbReference>
<dbReference type="Pfam" id="PF24877">
    <property type="entry name" value="ILV_EDD_C"/>
    <property type="match status" value="1"/>
</dbReference>
<dbReference type="Pfam" id="PF00920">
    <property type="entry name" value="ILVD_EDD_N"/>
    <property type="match status" value="1"/>
</dbReference>
<dbReference type="SUPFAM" id="SSF143975">
    <property type="entry name" value="IlvD/EDD N-terminal domain-like"/>
    <property type="match status" value="1"/>
</dbReference>
<dbReference type="SUPFAM" id="SSF52016">
    <property type="entry name" value="LeuD/IlvD-like"/>
    <property type="match status" value="1"/>
</dbReference>
<dbReference type="PROSITE" id="PS00886">
    <property type="entry name" value="ILVD_EDD_1"/>
    <property type="match status" value="1"/>
</dbReference>
<dbReference type="PROSITE" id="PS00887">
    <property type="entry name" value="ILVD_EDD_2"/>
    <property type="match status" value="1"/>
</dbReference>
<feature type="chain" id="PRO_0000225431" description="Dihydroxy-acid dehydratase">
    <location>
        <begin position="1"/>
        <end position="619"/>
    </location>
</feature>
<feature type="active site" description="Proton acceptor" evidence="1">
    <location>
        <position position="518"/>
    </location>
</feature>
<feature type="binding site" evidence="1">
    <location>
        <position position="81"/>
    </location>
    <ligand>
        <name>Mg(2+)</name>
        <dbReference type="ChEBI" id="CHEBI:18420"/>
    </ligand>
</feature>
<feature type="binding site" evidence="1">
    <location>
        <position position="122"/>
    </location>
    <ligand>
        <name>[2Fe-2S] cluster</name>
        <dbReference type="ChEBI" id="CHEBI:190135"/>
    </ligand>
</feature>
<feature type="binding site" evidence="1">
    <location>
        <position position="123"/>
    </location>
    <ligand>
        <name>Mg(2+)</name>
        <dbReference type="ChEBI" id="CHEBI:18420"/>
    </ligand>
</feature>
<feature type="binding site" description="via carbamate group" evidence="1">
    <location>
        <position position="124"/>
    </location>
    <ligand>
        <name>Mg(2+)</name>
        <dbReference type="ChEBI" id="CHEBI:18420"/>
    </ligand>
</feature>
<feature type="binding site" evidence="1">
    <location>
        <position position="195"/>
    </location>
    <ligand>
        <name>[2Fe-2S] cluster</name>
        <dbReference type="ChEBI" id="CHEBI:190135"/>
    </ligand>
</feature>
<feature type="binding site" evidence="1">
    <location>
        <position position="492"/>
    </location>
    <ligand>
        <name>Mg(2+)</name>
        <dbReference type="ChEBI" id="CHEBI:18420"/>
    </ligand>
</feature>
<feature type="modified residue" description="N6-carboxylysine" evidence="1">
    <location>
        <position position="124"/>
    </location>
</feature>